<comment type="function">
    <text evidence="1">Receptor for a number of inflammatory CC-chemokines including CCL3/MIP-1-alpha, CCL4/MIP-1-beta and RANTES and subsequently transduces a signal by increasing the intracellular calcium ion level. May play a role in the control of granulocytic lineage proliferation or differentiation. Participates in T-lymphocyte migration to the infection site by acting as a chemotactic receptor.</text>
</comment>
<comment type="subunit">
    <text evidence="1">Interacts with PRAF2. Efficient ligand binding to CCL3/MIP-1alpha and CCL4/MIP-1beta requires sulfation, O-glycosylation and sialic acid modifications. Glycosylation on Ser-6 is required for efficient binding of CCL4. Interacts with GRK2. Interacts with ARRB1 and ARRB2. Interacts with CNIH4. Interacts with S100A4; this interaction stimulates T-lymphocyte chemotaxis.</text>
</comment>
<comment type="subcellular location">
    <subcellularLocation>
        <location>Cell membrane</location>
        <topology>Multi-pass membrane protein</topology>
    </subcellularLocation>
</comment>
<comment type="PTM">
    <text evidence="1">Sulfated on at least 2 of the N-terminal tyrosines. Sulfation is required for efficient binding of the chemokines, CCL3 and CCL4 (By similarity).</text>
</comment>
<comment type="PTM">
    <text evidence="1">O-glycosylated, but not N-glycosylated. Ser-6 appears to be the major site. Also sialylated glycans present which contribute to chemokine binding (By similarity).</text>
</comment>
<comment type="PTM">
    <text evidence="1">Palmitoylation in the C-terminal is important for cell surface expression.</text>
</comment>
<comment type="PTM">
    <text evidence="1">Phosphorylation on serine residues in the C-terminal is stimulated by binding CC chemokines especially by APO-RANTES.</text>
</comment>
<comment type="similarity">
    <text evidence="3">Belongs to the G-protein coupled receptor 1 family.</text>
</comment>
<name>CCR5_MOUSE</name>
<dbReference type="EMBL" id="U47036">
    <property type="protein sequence ID" value="AAC52454.1"/>
    <property type="molecule type" value="mRNA"/>
</dbReference>
<dbReference type="EMBL" id="X94151">
    <property type="protein sequence ID" value="CAA63867.1"/>
    <property type="molecule type" value="mRNA"/>
</dbReference>
<dbReference type="EMBL" id="U68565">
    <property type="protein sequence ID" value="AAB37273.1"/>
    <property type="molecule type" value="Genomic_DNA"/>
</dbReference>
<dbReference type="EMBL" id="U83327">
    <property type="protein sequence ID" value="AAC53386.1"/>
    <property type="molecule type" value="Genomic_DNA"/>
</dbReference>
<dbReference type="EMBL" id="AF022990">
    <property type="protein sequence ID" value="AAC53389.1"/>
    <property type="molecule type" value="Genomic_DNA"/>
</dbReference>
<dbReference type="EMBL" id="AF019772">
    <property type="protein sequence ID" value="AAB71183.1"/>
    <property type="molecule type" value="Genomic_DNA"/>
</dbReference>
<dbReference type="EMBL" id="D83648">
    <property type="protein sequence ID" value="BAA12024.1"/>
    <property type="molecule type" value="mRNA"/>
</dbReference>
<dbReference type="EMBL" id="AK141906">
    <property type="protein sequence ID" value="BAE24879.1"/>
    <property type="molecule type" value="mRNA"/>
</dbReference>
<dbReference type="EMBL" id="AK154595">
    <property type="protein sequence ID" value="BAE32698.1"/>
    <property type="molecule type" value="mRNA"/>
</dbReference>
<dbReference type="EMBL" id="AK155628">
    <property type="protein sequence ID" value="BAE33354.1"/>
    <property type="molecule type" value="mRNA"/>
</dbReference>
<dbReference type="EMBL" id="AK155867">
    <property type="protein sequence ID" value="BAE33471.1"/>
    <property type="molecule type" value="mRNA"/>
</dbReference>
<dbReference type="EMBL" id="CH466671">
    <property type="protein sequence ID" value="EDL37177.1"/>
    <property type="molecule type" value="Genomic_DNA"/>
</dbReference>
<dbReference type="EMBL" id="BC103574">
    <property type="protein sequence ID" value="AAI03575.1"/>
    <property type="molecule type" value="mRNA"/>
</dbReference>
<dbReference type="EMBL" id="BC103586">
    <property type="protein sequence ID" value="AAI03587.1"/>
    <property type="molecule type" value="mRNA"/>
</dbReference>
<dbReference type="EMBL" id="BC103587">
    <property type="protein sequence ID" value="AAI03588.1"/>
    <property type="molecule type" value="mRNA"/>
</dbReference>
<dbReference type="CCDS" id="CCDS40821.1"/>
<dbReference type="RefSeq" id="NP_034047.2">
    <property type="nucleotide sequence ID" value="NM_009917.5"/>
</dbReference>
<dbReference type="RefSeq" id="XP_036010482.1">
    <property type="nucleotide sequence ID" value="XM_036154589.1"/>
</dbReference>
<dbReference type="SMR" id="P51682"/>
<dbReference type="FunCoup" id="P51682">
    <property type="interactions" value="745"/>
</dbReference>
<dbReference type="IntAct" id="P51682">
    <property type="interactions" value="4"/>
</dbReference>
<dbReference type="STRING" id="10090.ENSMUSP00000107069"/>
<dbReference type="BindingDB" id="P51682"/>
<dbReference type="ChEMBL" id="CHEMBL3676"/>
<dbReference type="DrugCentral" id="P51682"/>
<dbReference type="GlyCosmos" id="P51682">
    <property type="glycosylation" value="1 site, No reported glycans"/>
</dbReference>
<dbReference type="GlyGen" id="P51682">
    <property type="glycosylation" value="1 site"/>
</dbReference>
<dbReference type="iPTMnet" id="P51682"/>
<dbReference type="PhosphoSitePlus" id="P51682"/>
<dbReference type="PaxDb" id="10090-ENSMUSP00000107069"/>
<dbReference type="ProteomicsDB" id="281256"/>
<dbReference type="ABCD" id="P51682">
    <property type="antibodies" value="6 sequenced antibodies"/>
</dbReference>
<dbReference type="Antibodypedia" id="29674">
    <property type="antibodies" value="1911 antibodies from 49 providers"/>
</dbReference>
<dbReference type="DNASU" id="12774"/>
<dbReference type="Ensembl" id="ENSMUST00000111442.3">
    <property type="protein sequence ID" value="ENSMUSP00000107069.2"/>
    <property type="gene ID" value="ENSMUSG00000079227.11"/>
</dbReference>
<dbReference type="GeneID" id="12774"/>
<dbReference type="KEGG" id="mmu:12774"/>
<dbReference type="UCSC" id="uc009shd.2">
    <property type="organism name" value="mouse"/>
</dbReference>
<dbReference type="AGR" id="MGI:107182"/>
<dbReference type="CTD" id="1234"/>
<dbReference type="MGI" id="MGI:107182">
    <property type="gene designation" value="Ccr5"/>
</dbReference>
<dbReference type="VEuPathDB" id="HostDB:ENSMUSG00000079227"/>
<dbReference type="eggNOG" id="KOG3656">
    <property type="taxonomic scope" value="Eukaryota"/>
</dbReference>
<dbReference type="GeneTree" id="ENSGT01020000230359"/>
<dbReference type="HOGENOM" id="CLU_009579_8_3_1"/>
<dbReference type="InParanoid" id="P51682"/>
<dbReference type="OMA" id="HYTCSPH"/>
<dbReference type="OrthoDB" id="9876908at2759"/>
<dbReference type="PhylomeDB" id="P51682"/>
<dbReference type="TreeFam" id="TF330966"/>
<dbReference type="Reactome" id="R-MMU-380108">
    <property type="pathway name" value="Chemokine receptors bind chemokines"/>
</dbReference>
<dbReference type="Reactome" id="R-MMU-418594">
    <property type="pathway name" value="G alpha (i) signalling events"/>
</dbReference>
<dbReference type="BioGRID-ORCS" id="12774">
    <property type="hits" value="0 hits in 79 CRISPR screens"/>
</dbReference>
<dbReference type="ChiTaRS" id="Ccr5">
    <property type="organism name" value="mouse"/>
</dbReference>
<dbReference type="PRO" id="PR:P51682"/>
<dbReference type="Proteomes" id="UP000000589">
    <property type="component" value="Chromosome 9"/>
</dbReference>
<dbReference type="RNAct" id="P51682">
    <property type="molecule type" value="protein"/>
</dbReference>
<dbReference type="Bgee" id="ENSMUSG00000079227">
    <property type="expression patterns" value="Expressed in lumbar subsegment of spinal cord and 110 other cell types or tissues"/>
</dbReference>
<dbReference type="ExpressionAtlas" id="P51682">
    <property type="expression patterns" value="baseline and differential"/>
</dbReference>
<dbReference type="GO" id="GO:0009986">
    <property type="term" value="C:cell surface"/>
    <property type="evidence" value="ECO:0000314"/>
    <property type="project" value="MGI"/>
</dbReference>
<dbReference type="GO" id="GO:0005768">
    <property type="term" value="C:endosome"/>
    <property type="evidence" value="ECO:0007669"/>
    <property type="project" value="Ensembl"/>
</dbReference>
<dbReference type="GO" id="GO:0009897">
    <property type="term" value="C:external side of plasma membrane"/>
    <property type="evidence" value="ECO:0000314"/>
    <property type="project" value="MGI"/>
</dbReference>
<dbReference type="GO" id="GO:0003779">
    <property type="term" value="F:actin binding"/>
    <property type="evidence" value="ECO:0007669"/>
    <property type="project" value="Ensembl"/>
</dbReference>
<dbReference type="GO" id="GO:0019957">
    <property type="term" value="F:C-C chemokine binding"/>
    <property type="evidence" value="ECO:0000353"/>
    <property type="project" value="BHF-UCL"/>
</dbReference>
<dbReference type="GO" id="GO:0016493">
    <property type="term" value="F:C-C chemokine receptor activity"/>
    <property type="evidence" value="ECO:0000314"/>
    <property type="project" value="MGI"/>
</dbReference>
<dbReference type="GO" id="GO:0071791">
    <property type="term" value="F:chemokine (C-C motif) ligand 5 binding"/>
    <property type="evidence" value="ECO:0007669"/>
    <property type="project" value="Ensembl"/>
</dbReference>
<dbReference type="GO" id="GO:0042802">
    <property type="term" value="F:identical protein binding"/>
    <property type="evidence" value="ECO:0007669"/>
    <property type="project" value="Ensembl"/>
</dbReference>
<dbReference type="GO" id="GO:0006915">
    <property type="term" value="P:apoptotic process"/>
    <property type="evidence" value="ECO:0000315"/>
    <property type="project" value="MGI"/>
</dbReference>
<dbReference type="GO" id="GO:0019722">
    <property type="term" value="P:calcium-mediated signaling"/>
    <property type="evidence" value="ECO:0007669"/>
    <property type="project" value="Ensembl"/>
</dbReference>
<dbReference type="GO" id="GO:0007267">
    <property type="term" value="P:cell-cell signaling"/>
    <property type="evidence" value="ECO:0007669"/>
    <property type="project" value="Ensembl"/>
</dbReference>
<dbReference type="GO" id="GO:0071222">
    <property type="term" value="P:cellular response to lipopolysaccharide"/>
    <property type="evidence" value="ECO:0007669"/>
    <property type="project" value="Ensembl"/>
</dbReference>
<dbReference type="GO" id="GO:0006935">
    <property type="term" value="P:chemotaxis"/>
    <property type="evidence" value="ECO:0007669"/>
    <property type="project" value="InterPro"/>
</dbReference>
<dbReference type="GO" id="GO:0006952">
    <property type="term" value="P:defense response"/>
    <property type="evidence" value="ECO:0000315"/>
    <property type="project" value="MGI"/>
</dbReference>
<dbReference type="GO" id="GO:0006955">
    <property type="term" value="P:immune response"/>
    <property type="evidence" value="ECO:0007669"/>
    <property type="project" value="InterPro"/>
</dbReference>
<dbReference type="GO" id="GO:0006954">
    <property type="term" value="P:inflammatory response"/>
    <property type="evidence" value="ECO:0007669"/>
    <property type="project" value="InterPro"/>
</dbReference>
<dbReference type="GO" id="GO:0000165">
    <property type="term" value="P:MAPK cascade"/>
    <property type="evidence" value="ECO:0007669"/>
    <property type="project" value="Ensembl"/>
</dbReference>
<dbReference type="GO" id="GO:2000110">
    <property type="term" value="P:negative regulation of macrophage apoptotic process"/>
    <property type="evidence" value="ECO:0000314"/>
    <property type="project" value="BHF-UCL"/>
</dbReference>
<dbReference type="GO" id="GO:0014808">
    <property type="term" value="P:release of sequestered calcium ion into cytosol by sarcoplasmic reticulum"/>
    <property type="evidence" value="ECO:0007669"/>
    <property type="project" value="Ensembl"/>
</dbReference>
<dbReference type="GO" id="GO:0070723">
    <property type="term" value="P:response to cholesterol"/>
    <property type="evidence" value="ECO:0007669"/>
    <property type="project" value="Ensembl"/>
</dbReference>
<dbReference type="CDD" id="cd15184">
    <property type="entry name" value="7tmA_CCR5_CCR2"/>
    <property type="match status" value="1"/>
</dbReference>
<dbReference type="FunFam" id="1.20.1070.10:FF:000026">
    <property type="entry name" value="C-C chemokine receptor type 5"/>
    <property type="match status" value="1"/>
</dbReference>
<dbReference type="Gene3D" id="1.20.1070.10">
    <property type="entry name" value="Rhodopsin 7-helix transmembrane proteins"/>
    <property type="match status" value="1"/>
</dbReference>
<dbReference type="InterPro" id="IPR050119">
    <property type="entry name" value="CCR1-9-like"/>
</dbReference>
<dbReference type="InterPro" id="IPR002240">
    <property type="entry name" value="Chemokine_CCR5"/>
</dbReference>
<dbReference type="InterPro" id="IPR000355">
    <property type="entry name" value="Chemokine_rcpt"/>
</dbReference>
<dbReference type="InterPro" id="IPR000276">
    <property type="entry name" value="GPCR_Rhodpsn"/>
</dbReference>
<dbReference type="InterPro" id="IPR017452">
    <property type="entry name" value="GPCR_Rhodpsn_7TM"/>
</dbReference>
<dbReference type="PANTHER" id="PTHR10489:SF686">
    <property type="entry name" value="C-C CHEMOKINE RECEPTOR TYPE 5"/>
    <property type="match status" value="1"/>
</dbReference>
<dbReference type="PANTHER" id="PTHR10489">
    <property type="entry name" value="CELL ADHESION MOLECULE"/>
    <property type="match status" value="1"/>
</dbReference>
<dbReference type="Pfam" id="PF00001">
    <property type="entry name" value="7tm_1"/>
    <property type="match status" value="1"/>
</dbReference>
<dbReference type="PRINTS" id="PR00657">
    <property type="entry name" value="CCCHEMOKINER"/>
</dbReference>
<dbReference type="PRINTS" id="PR01110">
    <property type="entry name" value="CHEMOKINER5"/>
</dbReference>
<dbReference type="PRINTS" id="PR00237">
    <property type="entry name" value="GPCRRHODOPSN"/>
</dbReference>
<dbReference type="SUPFAM" id="SSF81321">
    <property type="entry name" value="Family A G protein-coupled receptor-like"/>
    <property type="match status" value="1"/>
</dbReference>
<dbReference type="PROSITE" id="PS00237">
    <property type="entry name" value="G_PROTEIN_RECEP_F1_1"/>
    <property type="match status" value="1"/>
</dbReference>
<dbReference type="PROSITE" id="PS50262">
    <property type="entry name" value="G_PROTEIN_RECEP_F1_2"/>
    <property type="match status" value="1"/>
</dbReference>
<keyword id="KW-1003">Cell membrane</keyword>
<keyword id="KW-1015">Disulfide bond</keyword>
<keyword id="KW-0297">G-protein coupled receptor</keyword>
<keyword id="KW-0325">Glycoprotein</keyword>
<keyword id="KW-0449">Lipoprotein</keyword>
<keyword id="KW-0472">Membrane</keyword>
<keyword id="KW-0564">Palmitate</keyword>
<keyword id="KW-0597">Phosphoprotein</keyword>
<keyword id="KW-0675">Receptor</keyword>
<keyword id="KW-1185">Reference proteome</keyword>
<keyword id="KW-0765">Sulfation</keyword>
<keyword id="KW-0807">Transducer</keyword>
<keyword id="KW-0812">Transmembrane</keyword>
<keyword id="KW-1133">Transmembrane helix</keyword>
<sequence>MDFQGSVPTYSYDIDYGMSAPCQKINVKQIAAQLLPPLYSLVFIFGFVGNMMVFLILISCKKLKSVTDIYLLNLAISDLLFLLTLPFWAHYAANEWVFGNIMCKVFTGLYHIGYFGGIFFIILLTIDRYLAIVHAVFALKVRTVNFGVITSVVTWAVAVFASLPEIIFTRSQKEGFHYTCSPHFPHTQYHFWKSFQTLKMVILSLILPLLVMVICYSGILHTLFRCRNEKKRHRAVRLIFAIMIVYFLFWTPYNIVLLLTTFQEFFGLNNCSSSNRLDQAMQATETLGMTHCCLNPVIYAFVGEKFRSYLSVFFRKHMVKRFCKRCSIFQQDNPDRASSVYTRSTGEHEVSTGL</sequence>
<proteinExistence type="evidence at transcript level"/>
<evidence type="ECO:0000250" key="1">
    <source>
        <dbReference type="UniProtKB" id="P51681"/>
    </source>
</evidence>
<evidence type="ECO:0000255" key="2"/>
<evidence type="ECO:0000255" key="3">
    <source>
        <dbReference type="PROSITE-ProRule" id="PRU00521"/>
    </source>
</evidence>
<evidence type="ECO:0000305" key="4"/>
<protein>
    <recommendedName>
        <fullName>C-C chemokine receptor type 5</fullName>
        <shortName>C-C CKR-5</shortName>
        <shortName>CC-CKR-5</shortName>
        <shortName>CCR-5</shortName>
    </recommendedName>
    <alternativeName>
        <fullName>MIP-1 alpha receptor</fullName>
    </alternativeName>
    <cdAntigenName>CD195</cdAntigenName>
</protein>
<organism>
    <name type="scientific">Mus musculus</name>
    <name type="common">Mouse</name>
    <dbReference type="NCBI Taxonomy" id="10090"/>
    <lineage>
        <taxon>Eukaryota</taxon>
        <taxon>Metazoa</taxon>
        <taxon>Chordata</taxon>
        <taxon>Craniata</taxon>
        <taxon>Vertebrata</taxon>
        <taxon>Euteleostomi</taxon>
        <taxon>Mammalia</taxon>
        <taxon>Eutheria</taxon>
        <taxon>Euarchontoglires</taxon>
        <taxon>Glires</taxon>
        <taxon>Rodentia</taxon>
        <taxon>Myomorpha</taxon>
        <taxon>Muroidea</taxon>
        <taxon>Muridae</taxon>
        <taxon>Murinae</taxon>
        <taxon>Mus</taxon>
        <taxon>Mus</taxon>
    </lineage>
</organism>
<accession>P51682</accession>
<accession>O35313</accession>
<accession>O35891</accession>
<accession>P97308</accession>
<accession>P97405</accession>
<accession>Q3ZAZ8</accession>
<accession>Q61867</accession>
<reference key="1">
    <citation type="journal article" date="1996" name="J. Biol. Chem.">
        <title>Molecular cloning and functional expression of murine JE (monocyte chemoattractant protein 1) and murine macrophage inflammatory protein 1alpha receptors: evidence for two closely linked C-C chemokine receptors on chromosome 9.</title>
        <authorList>
            <person name="Boring L."/>
            <person name="Gosling J."/>
            <person name="Monteclaro F.S."/>
            <person name="Lusis A.J."/>
            <person name="Tsou C.-L."/>
            <person name="Charo I.F."/>
        </authorList>
    </citation>
    <scope>NUCLEOTIDE SEQUENCE [MRNA]</scope>
    <source>
        <strain>129/SvJ</strain>
        <tissue>Spleen</tissue>
    </source>
</reference>
<reference key="2">
    <citation type="journal article" date="1996" name="J. Biol. Chem.">
        <title>Cloning and characterization of a novel murine macrophage inflammatory protein-1 alpha receptor.</title>
        <authorList>
            <person name="Meyer A."/>
            <person name="Coyle A.J."/>
            <person name="Proudfoot A.E.I."/>
            <person name="Wells T.N.C."/>
            <person name="Power C.A."/>
        </authorList>
    </citation>
    <scope>NUCLEOTIDE SEQUENCE [MRNA]</scope>
    <source>
        <strain>C57BL/6 X CBA</strain>
        <tissue>Thymus</tissue>
    </source>
</reference>
<reference key="3">
    <citation type="submission" date="1996-12" db="EMBL/GenBank/DDBJ databases">
        <authorList>
            <person name="Kuziel W.A."/>
            <person name="Beck M.A."/>
            <person name="Dawson T.C."/>
            <person name="Maeda N."/>
        </authorList>
    </citation>
    <scope>NUCLEOTIDE SEQUENCE [GENOMIC DNA]</scope>
    <source>
        <strain>129/Ola</strain>
    </source>
</reference>
<reference key="4">
    <citation type="journal article" date="1997" name="J. Virol.">
        <title>Polymorphisms in the CCR5 genes of African green monkeys and mice implicate specific amino acids in infections by simian and human immunodeficiency viruses.</title>
        <authorList>
            <person name="Kuhmann S.E."/>
            <person name="Platt E.J."/>
            <person name="Kozak S.L."/>
            <person name="Kabat D."/>
        </authorList>
    </citation>
    <scope>NUCLEOTIDE SEQUENCE [GENOMIC DNA]</scope>
    <source>
        <strain>C57BL/6J</strain>
        <strain>NIH Swiss</strain>
        <tissue>Kidney</tissue>
        <tissue>Liver</tissue>
        <tissue>Spleen</tissue>
    </source>
</reference>
<reference key="5">
    <citation type="journal article" date="1997" name="J. Virol.">
        <title>Two distinct CCR5 domains can mediate coreceptor usage by human immunodeficiency virus type 1.</title>
        <authorList>
            <person name="Doranz B.J."/>
            <person name="Lu Z.H."/>
            <person name="Rucker J."/>
            <person name="Zhang T.Y."/>
            <person name="Sharron M."/>
            <person name="Cen Y.H."/>
            <person name="Wang Z.X."/>
            <person name="Guo H.H."/>
            <person name="Du J.G."/>
            <person name="Accavitti M.A."/>
            <person name="Doms R.W."/>
            <person name="Peiper S.C."/>
        </authorList>
    </citation>
    <scope>NUCLEOTIDE SEQUENCE [GENOMIC DNA]</scope>
    <source>
        <strain>129</strain>
    </source>
</reference>
<reference key="6">
    <citation type="submission" date="1997-01" db="EMBL/GenBank/DDBJ databases">
        <authorList>
            <person name="Guo B."/>
            <person name="Kuno K."/>
            <person name="Harada A."/>
            <person name="Matsushima K."/>
        </authorList>
    </citation>
    <scope>NUCLEOTIDE SEQUENCE [MRNA]</scope>
</reference>
<reference key="7">
    <citation type="journal article" date="2005" name="Science">
        <title>The transcriptional landscape of the mammalian genome.</title>
        <authorList>
            <person name="Carninci P."/>
            <person name="Kasukawa T."/>
            <person name="Katayama S."/>
            <person name="Gough J."/>
            <person name="Frith M.C."/>
            <person name="Maeda N."/>
            <person name="Oyama R."/>
            <person name="Ravasi T."/>
            <person name="Lenhard B."/>
            <person name="Wells C."/>
            <person name="Kodzius R."/>
            <person name="Shimokawa K."/>
            <person name="Bajic V.B."/>
            <person name="Brenner S.E."/>
            <person name="Batalov S."/>
            <person name="Forrest A.R."/>
            <person name="Zavolan M."/>
            <person name="Davis M.J."/>
            <person name="Wilming L.G."/>
            <person name="Aidinis V."/>
            <person name="Allen J.E."/>
            <person name="Ambesi-Impiombato A."/>
            <person name="Apweiler R."/>
            <person name="Aturaliya R.N."/>
            <person name="Bailey T.L."/>
            <person name="Bansal M."/>
            <person name="Baxter L."/>
            <person name="Beisel K.W."/>
            <person name="Bersano T."/>
            <person name="Bono H."/>
            <person name="Chalk A.M."/>
            <person name="Chiu K.P."/>
            <person name="Choudhary V."/>
            <person name="Christoffels A."/>
            <person name="Clutterbuck D.R."/>
            <person name="Crowe M.L."/>
            <person name="Dalla E."/>
            <person name="Dalrymple B.P."/>
            <person name="de Bono B."/>
            <person name="Della Gatta G."/>
            <person name="di Bernardo D."/>
            <person name="Down T."/>
            <person name="Engstrom P."/>
            <person name="Fagiolini M."/>
            <person name="Faulkner G."/>
            <person name="Fletcher C.F."/>
            <person name="Fukushima T."/>
            <person name="Furuno M."/>
            <person name="Futaki S."/>
            <person name="Gariboldi M."/>
            <person name="Georgii-Hemming P."/>
            <person name="Gingeras T.R."/>
            <person name="Gojobori T."/>
            <person name="Green R.E."/>
            <person name="Gustincich S."/>
            <person name="Harbers M."/>
            <person name="Hayashi Y."/>
            <person name="Hensch T.K."/>
            <person name="Hirokawa N."/>
            <person name="Hill D."/>
            <person name="Huminiecki L."/>
            <person name="Iacono M."/>
            <person name="Ikeo K."/>
            <person name="Iwama A."/>
            <person name="Ishikawa T."/>
            <person name="Jakt M."/>
            <person name="Kanapin A."/>
            <person name="Katoh M."/>
            <person name="Kawasawa Y."/>
            <person name="Kelso J."/>
            <person name="Kitamura H."/>
            <person name="Kitano H."/>
            <person name="Kollias G."/>
            <person name="Krishnan S.P."/>
            <person name="Kruger A."/>
            <person name="Kummerfeld S.K."/>
            <person name="Kurochkin I.V."/>
            <person name="Lareau L.F."/>
            <person name="Lazarevic D."/>
            <person name="Lipovich L."/>
            <person name="Liu J."/>
            <person name="Liuni S."/>
            <person name="McWilliam S."/>
            <person name="Madan Babu M."/>
            <person name="Madera M."/>
            <person name="Marchionni L."/>
            <person name="Matsuda H."/>
            <person name="Matsuzawa S."/>
            <person name="Miki H."/>
            <person name="Mignone F."/>
            <person name="Miyake S."/>
            <person name="Morris K."/>
            <person name="Mottagui-Tabar S."/>
            <person name="Mulder N."/>
            <person name="Nakano N."/>
            <person name="Nakauchi H."/>
            <person name="Ng P."/>
            <person name="Nilsson R."/>
            <person name="Nishiguchi S."/>
            <person name="Nishikawa S."/>
            <person name="Nori F."/>
            <person name="Ohara O."/>
            <person name="Okazaki Y."/>
            <person name="Orlando V."/>
            <person name="Pang K.C."/>
            <person name="Pavan W.J."/>
            <person name="Pavesi G."/>
            <person name="Pesole G."/>
            <person name="Petrovsky N."/>
            <person name="Piazza S."/>
            <person name="Reed J."/>
            <person name="Reid J.F."/>
            <person name="Ring B.Z."/>
            <person name="Ringwald M."/>
            <person name="Rost B."/>
            <person name="Ruan Y."/>
            <person name="Salzberg S.L."/>
            <person name="Sandelin A."/>
            <person name="Schneider C."/>
            <person name="Schoenbach C."/>
            <person name="Sekiguchi K."/>
            <person name="Semple C.A."/>
            <person name="Seno S."/>
            <person name="Sessa L."/>
            <person name="Sheng Y."/>
            <person name="Shibata Y."/>
            <person name="Shimada H."/>
            <person name="Shimada K."/>
            <person name="Silva D."/>
            <person name="Sinclair B."/>
            <person name="Sperling S."/>
            <person name="Stupka E."/>
            <person name="Sugiura K."/>
            <person name="Sultana R."/>
            <person name="Takenaka Y."/>
            <person name="Taki K."/>
            <person name="Tammoja K."/>
            <person name="Tan S.L."/>
            <person name="Tang S."/>
            <person name="Taylor M.S."/>
            <person name="Tegner J."/>
            <person name="Teichmann S.A."/>
            <person name="Ueda H.R."/>
            <person name="van Nimwegen E."/>
            <person name="Verardo R."/>
            <person name="Wei C.L."/>
            <person name="Yagi K."/>
            <person name="Yamanishi H."/>
            <person name="Zabarovsky E."/>
            <person name="Zhu S."/>
            <person name="Zimmer A."/>
            <person name="Hide W."/>
            <person name="Bult C."/>
            <person name="Grimmond S.M."/>
            <person name="Teasdale R.D."/>
            <person name="Liu E.T."/>
            <person name="Brusic V."/>
            <person name="Quackenbush J."/>
            <person name="Wahlestedt C."/>
            <person name="Mattick J.S."/>
            <person name="Hume D.A."/>
            <person name="Kai C."/>
            <person name="Sasaki D."/>
            <person name="Tomaru Y."/>
            <person name="Fukuda S."/>
            <person name="Kanamori-Katayama M."/>
            <person name="Suzuki M."/>
            <person name="Aoki J."/>
            <person name="Arakawa T."/>
            <person name="Iida J."/>
            <person name="Imamura K."/>
            <person name="Itoh M."/>
            <person name="Kato T."/>
            <person name="Kawaji H."/>
            <person name="Kawagashira N."/>
            <person name="Kawashima T."/>
            <person name="Kojima M."/>
            <person name="Kondo S."/>
            <person name="Konno H."/>
            <person name="Nakano K."/>
            <person name="Ninomiya N."/>
            <person name="Nishio T."/>
            <person name="Okada M."/>
            <person name="Plessy C."/>
            <person name="Shibata K."/>
            <person name="Shiraki T."/>
            <person name="Suzuki S."/>
            <person name="Tagami M."/>
            <person name="Waki K."/>
            <person name="Watahiki A."/>
            <person name="Okamura-Oho Y."/>
            <person name="Suzuki H."/>
            <person name="Kawai J."/>
            <person name="Hayashizaki Y."/>
        </authorList>
    </citation>
    <scope>NUCLEOTIDE SEQUENCE [LARGE SCALE MRNA]</scope>
    <source>
        <strain>C57BL/6J</strain>
        <strain>NOD</strain>
        <tissue>Spinal ganglion</tissue>
    </source>
</reference>
<reference key="8">
    <citation type="submission" date="2005-09" db="EMBL/GenBank/DDBJ databases">
        <authorList>
            <person name="Mural R.J."/>
            <person name="Adams M.D."/>
            <person name="Myers E.W."/>
            <person name="Smith H.O."/>
            <person name="Venter J.C."/>
        </authorList>
    </citation>
    <scope>NUCLEOTIDE SEQUENCE [LARGE SCALE GENOMIC DNA]</scope>
</reference>
<reference key="9">
    <citation type="journal article" date="2004" name="Genome Res.">
        <title>The status, quality, and expansion of the NIH full-length cDNA project: the Mammalian Gene Collection (MGC).</title>
        <authorList>
            <consortium name="The MGC Project Team"/>
        </authorList>
    </citation>
    <scope>NUCLEOTIDE SEQUENCE [LARGE SCALE MRNA]</scope>
</reference>
<gene>
    <name type="primary">Ccr5</name>
    <name type="synonym">Cmkbr5</name>
</gene>
<feature type="chain" id="PRO_0000069269" description="C-C chemokine receptor type 5">
    <location>
        <begin position="1"/>
        <end position="354"/>
    </location>
</feature>
<feature type="topological domain" description="Extracellular" evidence="2">
    <location>
        <begin position="1"/>
        <end position="32"/>
    </location>
</feature>
<feature type="transmembrane region" description="Helical; Name=1" evidence="2">
    <location>
        <begin position="33"/>
        <end position="60"/>
    </location>
</feature>
<feature type="topological domain" description="Cytoplasmic" evidence="2">
    <location>
        <begin position="61"/>
        <end position="70"/>
    </location>
</feature>
<feature type="transmembrane region" description="Helical; Name=2" evidence="2">
    <location>
        <begin position="71"/>
        <end position="91"/>
    </location>
</feature>
<feature type="topological domain" description="Extracellular" evidence="2">
    <location>
        <begin position="92"/>
        <end position="104"/>
    </location>
</feature>
<feature type="transmembrane region" description="Helical; Name=3" evidence="2">
    <location>
        <begin position="105"/>
        <end position="126"/>
    </location>
</feature>
<feature type="topological domain" description="Cytoplasmic" evidence="2">
    <location>
        <begin position="127"/>
        <end position="143"/>
    </location>
</feature>
<feature type="transmembrane region" description="Helical; Name=4" evidence="2">
    <location>
        <begin position="144"/>
        <end position="168"/>
    </location>
</feature>
<feature type="topological domain" description="Extracellular" evidence="2">
    <location>
        <begin position="169"/>
        <end position="200"/>
    </location>
</feature>
<feature type="transmembrane region" description="Helical; Name=5" evidence="2">
    <location>
        <begin position="201"/>
        <end position="220"/>
    </location>
</feature>
<feature type="topological domain" description="Cytoplasmic" evidence="2">
    <location>
        <begin position="221"/>
        <end position="237"/>
    </location>
</feature>
<feature type="transmembrane region" description="Helical; Name=6" evidence="2">
    <location>
        <begin position="238"/>
        <end position="262"/>
    </location>
</feature>
<feature type="topological domain" description="Extracellular" evidence="2">
    <location>
        <begin position="263"/>
        <end position="279"/>
    </location>
</feature>
<feature type="transmembrane region" description="Helical; Name=7" evidence="2">
    <location>
        <begin position="280"/>
        <end position="303"/>
    </location>
</feature>
<feature type="topological domain" description="Cytoplasmic" evidence="2">
    <location>
        <begin position="304"/>
        <end position="354"/>
    </location>
</feature>
<feature type="modified residue" description="Sulfotyrosine" evidence="2">
    <location>
        <position position="10"/>
    </location>
</feature>
<feature type="modified residue" description="Sulfotyrosine" evidence="2">
    <location>
        <position position="12"/>
    </location>
</feature>
<feature type="modified residue" description="Sulfotyrosine" evidence="2">
    <location>
        <position position="16"/>
    </location>
</feature>
<feature type="modified residue" description="Phosphoserine; by BARK1" evidence="1">
    <location>
        <position position="338"/>
    </location>
</feature>
<feature type="modified residue" description="Phosphoserine; by BARK1" evidence="1">
    <location>
        <position position="339"/>
    </location>
</feature>
<feature type="modified residue" description="Phosphoserine; by BARK1" evidence="1">
    <location>
        <position position="344"/>
    </location>
</feature>
<feature type="modified residue" description="Phosphoserine; by BARK1" evidence="1">
    <location>
        <position position="351"/>
    </location>
</feature>
<feature type="lipid moiety-binding region" description="S-palmitoyl cysteine" evidence="1">
    <location>
        <position position="323"/>
    </location>
</feature>
<feature type="lipid moiety-binding region" description="S-palmitoyl cysteine" evidence="1">
    <location>
        <position position="326"/>
    </location>
</feature>
<feature type="glycosylation site" description="O-linked (GalNAc...) serine" evidence="1">
    <location>
        <position position="6"/>
    </location>
</feature>
<feature type="disulfide bond" evidence="1">
    <location>
        <begin position="22"/>
        <end position="271"/>
    </location>
</feature>
<feature type="disulfide bond" evidence="3">
    <location>
        <begin position="103"/>
        <end position="180"/>
    </location>
</feature>
<feature type="sequence variant">
    <original>S</original>
    <variation>I</variation>
    <location>
        <position position="11"/>
    </location>
</feature>
<feature type="sequence variant">
    <original>V</original>
    <variation>I</variation>
    <location>
        <position position="97"/>
    </location>
</feature>
<feature type="sequence variant">
    <original>L</original>
    <variation>V</variation>
    <location>
        <position position="109"/>
    </location>
</feature>
<feature type="sequence variant">
    <original>A</original>
    <variation>V</variation>
    <location>
        <position position="156"/>
    </location>
</feature>
<feature type="sequence variant">
    <original>V</original>
    <variation>I</variation>
    <location>
        <position position="213"/>
    </location>
</feature>
<feature type="sequence variant">
    <original>M</original>
    <variation>I</variation>
    <location>
        <position position="318"/>
    </location>
</feature>
<feature type="sequence variant">
    <original>A</original>
    <variation>V</variation>
    <location>
        <position position="337"/>
    </location>
</feature>
<feature type="sequence conflict" description="In Ref. 2; CAA63867." evidence="4" ref="2">
    <original>F</original>
    <variation>L</variation>
    <location>
        <position position="3"/>
    </location>
</feature>
<feature type="sequence conflict" description="In Ref. 4; AAC53386." evidence="4" ref="4">
    <original>K</original>
    <variation>R</variation>
    <location>
        <position position="62"/>
    </location>
</feature>
<feature type="sequence conflict" description="In Ref. 4; AAC53386." evidence="4" ref="4">
    <original>V</original>
    <variation>M</variation>
    <location>
        <position position="66"/>
    </location>
</feature>
<feature type="sequence conflict" description="In Ref. 2; CAA63867." evidence="4" ref="2">
    <original>L</original>
    <variation>F</variation>
    <location>
        <position position="80"/>
    </location>
</feature>
<feature type="sequence conflict" description="In Ref. 5; AAB71183." evidence="4" ref="5">
    <original>N</original>
    <variation>I</variation>
    <location>
        <position position="145"/>
    </location>
</feature>
<feature type="sequence conflict" description="In Ref. 4; AAC53386." evidence="4" ref="4">
    <original>F</original>
    <variation>S</variation>
    <location>
        <position position="160"/>
    </location>
</feature>
<feature type="sequence conflict" description="In Ref. 4; AAC53386." evidence="4" ref="4">
    <original>P</original>
    <variation>L</variation>
    <location>
        <position position="185"/>
    </location>
</feature>
<feature type="sequence conflict" description="In Ref. 3; AAB37273." evidence="4" ref="3">
    <original>H</original>
    <variation>Y</variation>
    <location>
        <position position="190"/>
    </location>
</feature>
<feature type="sequence conflict" description="In Ref. 1; AAC52454." evidence="4" ref="1">
    <original>P</original>
    <variation>S</variation>
    <location>
        <position position="208"/>
    </location>
</feature>